<organism>
    <name type="scientific">Lactococcus lactis subsp. cremoris (strain MG1363)</name>
    <dbReference type="NCBI Taxonomy" id="416870"/>
    <lineage>
        <taxon>Bacteria</taxon>
        <taxon>Bacillati</taxon>
        <taxon>Bacillota</taxon>
        <taxon>Bacilli</taxon>
        <taxon>Lactobacillales</taxon>
        <taxon>Streptococcaceae</taxon>
        <taxon>Lactococcus</taxon>
        <taxon>Lactococcus cremoris subsp. cremoris</taxon>
    </lineage>
</organism>
<dbReference type="EMBL" id="AM406671">
    <property type="protein sequence ID" value="CAL96979.1"/>
    <property type="molecule type" value="Genomic_DNA"/>
</dbReference>
<dbReference type="RefSeq" id="WP_011675413.1">
    <property type="nucleotide sequence ID" value="NC_009004.1"/>
</dbReference>
<dbReference type="SMR" id="A2RI85"/>
<dbReference type="STRING" id="416870.llmg_0374"/>
<dbReference type="GeneID" id="61108677"/>
<dbReference type="KEGG" id="llm:llmg_0374"/>
<dbReference type="eggNOG" id="COG0468">
    <property type="taxonomic scope" value="Bacteria"/>
</dbReference>
<dbReference type="HOGENOM" id="CLU_040469_3_2_9"/>
<dbReference type="OrthoDB" id="9776733at2"/>
<dbReference type="PhylomeDB" id="A2RI85"/>
<dbReference type="Proteomes" id="UP000000364">
    <property type="component" value="Chromosome"/>
</dbReference>
<dbReference type="GO" id="GO:0005829">
    <property type="term" value="C:cytosol"/>
    <property type="evidence" value="ECO:0007669"/>
    <property type="project" value="TreeGrafter"/>
</dbReference>
<dbReference type="GO" id="GO:0005524">
    <property type="term" value="F:ATP binding"/>
    <property type="evidence" value="ECO:0007669"/>
    <property type="project" value="UniProtKB-UniRule"/>
</dbReference>
<dbReference type="GO" id="GO:0016887">
    <property type="term" value="F:ATP hydrolysis activity"/>
    <property type="evidence" value="ECO:0007669"/>
    <property type="project" value="InterPro"/>
</dbReference>
<dbReference type="GO" id="GO:0140664">
    <property type="term" value="F:ATP-dependent DNA damage sensor activity"/>
    <property type="evidence" value="ECO:0007669"/>
    <property type="project" value="InterPro"/>
</dbReference>
<dbReference type="GO" id="GO:0003684">
    <property type="term" value="F:damaged DNA binding"/>
    <property type="evidence" value="ECO:0007669"/>
    <property type="project" value="UniProtKB-UniRule"/>
</dbReference>
<dbReference type="GO" id="GO:0003697">
    <property type="term" value="F:single-stranded DNA binding"/>
    <property type="evidence" value="ECO:0007669"/>
    <property type="project" value="UniProtKB-UniRule"/>
</dbReference>
<dbReference type="GO" id="GO:0006310">
    <property type="term" value="P:DNA recombination"/>
    <property type="evidence" value="ECO:0007669"/>
    <property type="project" value="UniProtKB-UniRule"/>
</dbReference>
<dbReference type="GO" id="GO:0006281">
    <property type="term" value="P:DNA repair"/>
    <property type="evidence" value="ECO:0007669"/>
    <property type="project" value="UniProtKB-UniRule"/>
</dbReference>
<dbReference type="GO" id="GO:0009432">
    <property type="term" value="P:SOS response"/>
    <property type="evidence" value="ECO:0007669"/>
    <property type="project" value="UniProtKB-UniRule"/>
</dbReference>
<dbReference type="CDD" id="cd00983">
    <property type="entry name" value="RecA"/>
    <property type="match status" value="1"/>
</dbReference>
<dbReference type="FunFam" id="3.40.50.300:FF:000087">
    <property type="entry name" value="Recombinase RecA"/>
    <property type="match status" value="1"/>
</dbReference>
<dbReference type="Gene3D" id="3.40.50.300">
    <property type="entry name" value="P-loop containing nucleotide triphosphate hydrolases"/>
    <property type="match status" value="1"/>
</dbReference>
<dbReference type="HAMAP" id="MF_00268">
    <property type="entry name" value="RecA"/>
    <property type="match status" value="1"/>
</dbReference>
<dbReference type="InterPro" id="IPR003593">
    <property type="entry name" value="AAA+_ATPase"/>
</dbReference>
<dbReference type="InterPro" id="IPR013765">
    <property type="entry name" value="DNA_recomb/repair_RecA"/>
</dbReference>
<dbReference type="InterPro" id="IPR020584">
    <property type="entry name" value="DNA_recomb/repair_RecA_CS"/>
</dbReference>
<dbReference type="InterPro" id="IPR027417">
    <property type="entry name" value="P-loop_NTPase"/>
</dbReference>
<dbReference type="InterPro" id="IPR049261">
    <property type="entry name" value="RecA-like_C"/>
</dbReference>
<dbReference type="InterPro" id="IPR049428">
    <property type="entry name" value="RecA-like_N"/>
</dbReference>
<dbReference type="InterPro" id="IPR020588">
    <property type="entry name" value="RecA_ATP-bd"/>
</dbReference>
<dbReference type="InterPro" id="IPR023400">
    <property type="entry name" value="RecA_C_sf"/>
</dbReference>
<dbReference type="InterPro" id="IPR020587">
    <property type="entry name" value="RecA_monomer-monomer_interface"/>
</dbReference>
<dbReference type="NCBIfam" id="TIGR02012">
    <property type="entry name" value="tigrfam_recA"/>
    <property type="match status" value="1"/>
</dbReference>
<dbReference type="PANTHER" id="PTHR45900:SF1">
    <property type="entry name" value="MITOCHONDRIAL DNA REPAIR PROTEIN RECA HOMOLOG-RELATED"/>
    <property type="match status" value="1"/>
</dbReference>
<dbReference type="PANTHER" id="PTHR45900">
    <property type="entry name" value="RECA"/>
    <property type="match status" value="1"/>
</dbReference>
<dbReference type="Pfam" id="PF00154">
    <property type="entry name" value="RecA"/>
    <property type="match status" value="1"/>
</dbReference>
<dbReference type="Pfam" id="PF21096">
    <property type="entry name" value="RecA_C"/>
    <property type="match status" value="1"/>
</dbReference>
<dbReference type="PRINTS" id="PR00142">
    <property type="entry name" value="RECA"/>
</dbReference>
<dbReference type="SMART" id="SM00382">
    <property type="entry name" value="AAA"/>
    <property type="match status" value="1"/>
</dbReference>
<dbReference type="SUPFAM" id="SSF52540">
    <property type="entry name" value="P-loop containing nucleoside triphosphate hydrolases"/>
    <property type="match status" value="1"/>
</dbReference>
<dbReference type="SUPFAM" id="SSF54752">
    <property type="entry name" value="RecA protein, C-terminal domain"/>
    <property type="match status" value="1"/>
</dbReference>
<dbReference type="PROSITE" id="PS00321">
    <property type="entry name" value="RECA_1"/>
    <property type="match status" value="1"/>
</dbReference>
<dbReference type="PROSITE" id="PS50162">
    <property type="entry name" value="RECA_2"/>
    <property type="match status" value="1"/>
</dbReference>
<dbReference type="PROSITE" id="PS50163">
    <property type="entry name" value="RECA_3"/>
    <property type="match status" value="1"/>
</dbReference>
<name>RECA_LACLM</name>
<reference key="1">
    <citation type="journal article" date="2007" name="J. Bacteriol.">
        <title>The complete genome sequence of the lactic acid bacterial paradigm Lactococcus lactis subsp. cremoris MG1363.</title>
        <authorList>
            <person name="Wegmann U."/>
            <person name="O'Connell-Motherway M."/>
            <person name="Zomer A."/>
            <person name="Buist G."/>
            <person name="Shearman C."/>
            <person name="Canchaya C."/>
            <person name="Ventura M."/>
            <person name="Goesmann A."/>
            <person name="Gasson M.J."/>
            <person name="Kuipers O.P."/>
            <person name="van Sinderen D."/>
            <person name="Kok J."/>
        </authorList>
    </citation>
    <scope>NUCLEOTIDE SEQUENCE [LARGE SCALE GENOMIC DNA]</scope>
    <source>
        <strain>MG1363</strain>
    </source>
</reference>
<proteinExistence type="inferred from homology"/>
<protein>
    <recommendedName>
        <fullName evidence="1">Protein RecA</fullName>
    </recommendedName>
    <alternativeName>
        <fullName evidence="1">Recombinase A</fullName>
    </alternativeName>
</protein>
<feature type="chain" id="PRO_0000285246" description="Protein RecA">
    <location>
        <begin position="1"/>
        <end position="387"/>
    </location>
</feature>
<feature type="region of interest" description="Disordered" evidence="2">
    <location>
        <begin position="348"/>
        <end position="387"/>
    </location>
</feature>
<feature type="compositionally biased region" description="Acidic residues" evidence="2">
    <location>
        <begin position="349"/>
        <end position="360"/>
    </location>
</feature>
<feature type="compositionally biased region" description="Acidic residues" evidence="2">
    <location>
        <begin position="378"/>
        <end position="387"/>
    </location>
</feature>
<feature type="binding site" evidence="1">
    <location>
        <begin position="80"/>
        <end position="87"/>
    </location>
    <ligand>
        <name>ATP</name>
        <dbReference type="ChEBI" id="CHEBI:30616"/>
    </ligand>
</feature>
<sequence length="387" mass="41380">MATKKKTNFDDITKKYGAERDKALADALALIEKDFGKGSLMRLGEAANQKVSVVSSGSLALDIALGAGGYPKGRIVEIYGPESSGKTTVALHAVAAVQKEGGIAAFIDAENALDPEYAKALGVNIDELLLSQPDYGEQGLQIAEKLITSGAVDLVVIDSVAALVPKAEIDGEIGDSSVGLQARMMSQAMRKLAGHINKTKTTAIFINQLREKVGVMFGSPETTPGGRALKFYASVRLDVRGSTKIEEGSGDNKTQIGKITKIKVVKNKVAPPFKVALVDIMFGEGISSTGELLNIAVEEGIIKKSGAWFAYNDEKIGQGAEKAKNYLKEHQDVFDEIDHKVRAAHGLLDDSEVAETEEETTASKTKAKAKKEEKAVETEEIELELED</sequence>
<accession>A2RI85</accession>
<comment type="function">
    <text evidence="1">Can catalyze the hydrolysis of ATP in the presence of single-stranded DNA, the ATP-dependent uptake of single-stranded DNA by duplex DNA, and the ATP-dependent hybridization of homologous single-stranded DNAs. It interacts with LexA causing its activation and leading to its autocatalytic cleavage.</text>
</comment>
<comment type="subcellular location">
    <subcellularLocation>
        <location evidence="1">Cytoplasm</location>
    </subcellularLocation>
</comment>
<comment type="similarity">
    <text evidence="1">Belongs to the RecA family.</text>
</comment>
<evidence type="ECO:0000255" key="1">
    <source>
        <dbReference type="HAMAP-Rule" id="MF_00268"/>
    </source>
</evidence>
<evidence type="ECO:0000256" key="2">
    <source>
        <dbReference type="SAM" id="MobiDB-lite"/>
    </source>
</evidence>
<keyword id="KW-0067">ATP-binding</keyword>
<keyword id="KW-0963">Cytoplasm</keyword>
<keyword id="KW-0227">DNA damage</keyword>
<keyword id="KW-0233">DNA recombination</keyword>
<keyword id="KW-0234">DNA repair</keyword>
<keyword id="KW-0238">DNA-binding</keyword>
<keyword id="KW-0547">Nucleotide-binding</keyword>
<keyword id="KW-0742">SOS response</keyword>
<gene>
    <name evidence="1" type="primary">recA</name>
    <name type="ordered locus">llmg_0374</name>
</gene>